<dbReference type="EMBL" id="BA000019">
    <property type="protein sequence ID" value="BAB75975.1"/>
    <property type="molecule type" value="Genomic_DNA"/>
</dbReference>
<dbReference type="PIR" id="AE2340">
    <property type="entry name" value="AE2340"/>
</dbReference>
<dbReference type="RefSeq" id="WP_010998414.1">
    <property type="nucleotide sequence ID" value="NZ_RSCN01000010.1"/>
</dbReference>
<dbReference type="SMR" id="Q8YPC2"/>
<dbReference type="STRING" id="103690.gene:10496325"/>
<dbReference type="KEGG" id="ana:all4276"/>
<dbReference type="eggNOG" id="COG0217">
    <property type="taxonomic scope" value="Bacteria"/>
</dbReference>
<dbReference type="OrthoDB" id="9781053at2"/>
<dbReference type="Proteomes" id="UP000002483">
    <property type="component" value="Chromosome"/>
</dbReference>
<dbReference type="GO" id="GO:0005829">
    <property type="term" value="C:cytosol"/>
    <property type="evidence" value="ECO:0007669"/>
    <property type="project" value="TreeGrafter"/>
</dbReference>
<dbReference type="GO" id="GO:0003677">
    <property type="term" value="F:DNA binding"/>
    <property type="evidence" value="ECO:0007669"/>
    <property type="project" value="UniProtKB-UniRule"/>
</dbReference>
<dbReference type="GO" id="GO:0006355">
    <property type="term" value="P:regulation of DNA-templated transcription"/>
    <property type="evidence" value="ECO:0007669"/>
    <property type="project" value="UniProtKB-UniRule"/>
</dbReference>
<dbReference type="FunFam" id="1.10.10.200:FF:000002">
    <property type="entry name" value="Probable transcriptional regulatory protein CLM62_37755"/>
    <property type="match status" value="1"/>
</dbReference>
<dbReference type="Gene3D" id="1.10.10.200">
    <property type="match status" value="1"/>
</dbReference>
<dbReference type="Gene3D" id="3.30.70.980">
    <property type="match status" value="2"/>
</dbReference>
<dbReference type="HAMAP" id="MF_00693">
    <property type="entry name" value="Transcrip_reg_TACO1"/>
    <property type="match status" value="1"/>
</dbReference>
<dbReference type="InterPro" id="IPR017856">
    <property type="entry name" value="Integrase-like_N"/>
</dbReference>
<dbReference type="InterPro" id="IPR048300">
    <property type="entry name" value="TACO1_YebC-like_2nd/3rd_dom"/>
</dbReference>
<dbReference type="InterPro" id="IPR049083">
    <property type="entry name" value="TACO1_YebC_N"/>
</dbReference>
<dbReference type="InterPro" id="IPR002876">
    <property type="entry name" value="Transcrip_reg_TACO1-like"/>
</dbReference>
<dbReference type="InterPro" id="IPR026564">
    <property type="entry name" value="Transcrip_reg_TACO1-like_dom3"/>
</dbReference>
<dbReference type="InterPro" id="IPR029072">
    <property type="entry name" value="YebC-like"/>
</dbReference>
<dbReference type="NCBIfam" id="NF001030">
    <property type="entry name" value="PRK00110.1"/>
    <property type="match status" value="1"/>
</dbReference>
<dbReference type="NCBIfam" id="NF009044">
    <property type="entry name" value="PRK12378.1"/>
    <property type="match status" value="1"/>
</dbReference>
<dbReference type="NCBIfam" id="TIGR01033">
    <property type="entry name" value="YebC/PmpR family DNA-binding transcriptional regulator"/>
    <property type="match status" value="1"/>
</dbReference>
<dbReference type="PANTHER" id="PTHR12532:SF6">
    <property type="entry name" value="TRANSCRIPTIONAL REGULATORY PROTEIN YEBC-RELATED"/>
    <property type="match status" value="1"/>
</dbReference>
<dbReference type="PANTHER" id="PTHR12532">
    <property type="entry name" value="TRANSLATIONAL ACTIVATOR OF CYTOCHROME C OXIDASE 1"/>
    <property type="match status" value="1"/>
</dbReference>
<dbReference type="Pfam" id="PF20772">
    <property type="entry name" value="TACO1_YebC_N"/>
    <property type="match status" value="1"/>
</dbReference>
<dbReference type="Pfam" id="PF01709">
    <property type="entry name" value="Transcrip_reg"/>
    <property type="match status" value="1"/>
</dbReference>
<dbReference type="SUPFAM" id="SSF75625">
    <property type="entry name" value="YebC-like"/>
    <property type="match status" value="1"/>
</dbReference>
<reference key="1">
    <citation type="journal article" date="2001" name="DNA Res.">
        <title>Complete genomic sequence of the filamentous nitrogen-fixing cyanobacterium Anabaena sp. strain PCC 7120.</title>
        <authorList>
            <person name="Kaneko T."/>
            <person name="Nakamura Y."/>
            <person name="Wolk C.P."/>
            <person name="Kuritz T."/>
            <person name="Sasamoto S."/>
            <person name="Watanabe A."/>
            <person name="Iriguchi M."/>
            <person name="Ishikawa A."/>
            <person name="Kawashima K."/>
            <person name="Kimura T."/>
            <person name="Kishida Y."/>
            <person name="Kohara M."/>
            <person name="Matsumoto M."/>
            <person name="Matsuno A."/>
            <person name="Muraki A."/>
            <person name="Nakazaki N."/>
            <person name="Shimpo S."/>
            <person name="Sugimoto M."/>
            <person name="Takazawa M."/>
            <person name="Yamada M."/>
            <person name="Yasuda M."/>
            <person name="Tabata S."/>
        </authorList>
    </citation>
    <scope>NUCLEOTIDE SEQUENCE [LARGE SCALE GENOMIC DNA]</scope>
    <source>
        <strain>PCC 7120 / SAG 25.82 / UTEX 2576</strain>
    </source>
</reference>
<name>Y4276_NOSS1</name>
<comment type="subcellular location">
    <subcellularLocation>
        <location evidence="1">Cytoplasm</location>
    </subcellularLocation>
</comment>
<comment type="similarity">
    <text evidence="1">Belongs to the TACO1 family.</text>
</comment>
<evidence type="ECO:0000255" key="1">
    <source>
        <dbReference type="HAMAP-Rule" id="MF_00693"/>
    </source>
</evidence>
<gene>
    <name type="ordered locus">all4276</name>
</gene>
<sequence length="252" mass="27154">MAGHSKWANIKRQKAVVDAKKGKTFTQLSRAIILAARSGVPDPSGNFQLRTAIDKAKAAGIPNDNIERAIAKGAGTFGGDNASLEEIRYEGYGPGGVAILIEALTDNRNRTAADLRVAFSKNGGNLGETGCVSWMFDQKGVCVVSGVVDEDQLLEASLEGGAESYEMTEDETAEVFTEVANLEILNQTLKDQGFKVTDAELRWIPSNHLEVTEPDQARSLLKLIDTLEGLDDVQNVTSNFEMSENLMAVSFA</sequence>
<feature type="chain" id="PRO_0000175749" description="Probable transcriptional regulatory protein all4276">
    <location>
        <begin position="1"/>
        <end position="252"/>
    </location>
</feature>
<keyword id="KW-0963">Cytoplasm</keyword>
<keyword id="KW-0238">DNA-binding</keyword>
<keyword id="KW-1185">Reference proteome</keyword>
<keyword id="KW-0804">Transcription</keyword>
<keyword id="KW-0805">Transcription regulation</keyword>
<accession>Q8YPC2</accession>
<organism>
    <name type="scientific">Nostoc sp. (strain PCC 7120 / SAG 25.82 / UTEX 2576)</name>
    <dbReference type="NCBI Taxonomy" id="103690"/>
    <lineage>
        <taxon>Bacteria</taxon>
        <taxon>Bacillati</taxon>
        <taxon>Cyanobacteriota</taxon>
        <taxon>Cyanophyceae</taxon>
        <taxon>Nostocales</taxon>
        <taxon>Nostocaceae</taxon>
        <taxon>Nostoc</taxon>
    </lineage>
</organism>
<protein>
    <recommendedName>
        <fullName evidence="1">Probable transcriptional regulatory protein all4276</fullName>
    </recommendedName>
</protein>
<proteinExistence type="inferred from homology"/>